<keyword id="KW-0025">Alternative splicing</keyword>
<keyword id="KW-0378">Hydrolase</keyword>
<keyword id="KW-1185">Reference proteome</keyword>
<keyword id="KW-0677">Repeat</keyword>
<keyword id="KW-0853">WD repeat</keyword>
<accession>Q9CYU6</accession>
<accession>A2AJ86</accession>
<accession>Q5RJV7</accession>
<accession>Q8BIT9</accession>
<dbReference type="EC" id="3.1.1.97"/>
<dbReference type="EMBL" id="AK013297">
    <property type="protein sequence ID" value="BAB28775.1"/>
    <property type="molecule type" value="mRNA"/>
</dbReference>
<dbReference type="EMBL" id="AK078448">
    <property type="protein sequence ID" value="BAC37279.1"/>
    <property type="molecule type" value="mRNA"/>
</dbReference>
<dbReference type="EMBL" id="AK087998">
    <property type="protein sequence ID" value="BAC40084.1"/>
    <property type="molecule type" value="mRNA"/>
</dbReference>
<dbReference type="EMBL" id="AL732585">
    <property type="status" value="NOT_ANNOTATED_CDS"/>
    <property type="molecule type" value="Genomic_DNA"/>
</dbReference>
<dbReference type="EMBL" id="BC086486">
    <property type="status" value="NOT_ANNOTATED_CDS"/>
    <property type="molecule type" value="mRNA"/>
</dbReference>
<dbReference type="CCDS" id="CCDS15743.1">
    <molecule id="Q9CYU6-1"/>
</dbReference>
<dbReference type="RefSeq" id="NP_001342483.1">
    <molecule id="Q9CYU6-2"/>
    <property type="nucleotide sequence ID" value="NM_001355554.1"/>
</dbReference>
<dbReference type="RefSeq" id="NP_080320.1">
    <molecule id="Q9CYU6-1"/>
    <property type="nucleotide sequence ID" value="NM_026044.4"/>
</dbReference>
<dbReference type="FunCoup" id="Q9CYU6">
    <property type="interactions" value="1399"/>
</dbReference>
<dbReference type="STRING" id="10090.ENSMUSP00000028351"/>
<dbReference type="iPTMnet" id="Q9CYU6"/>
<dbReference type="PhosphoSitePlus" id="Q9CYU6"/>
<dbReference type="PaxDb" id="10090-ENSMUSP00000028351"/>
<dbReference type="PeptideAtlas" id="Q9CYU6"/>
<dbReference type="ProteomicsDB" id="277383">
    <molecule id="Q9CYU6-1"/>
</dbReference>
<dbReference type="ProteomicsDB" id="277384">
    <molecule id="Q9CYU6-2"/>
</dbReference>
<dbReference type="Antibodypedia" id="19075">
    <property type="antibodies" value="106 antibodies from 19 providers"/>
</dbReference>
<dbReference type="DNASU" id="67228"/>
<dbReference type="Ensembl" id="ENSMUST00000028351.9">
    <molecule id="Q9CYU6-1"/>
    <property type="protein sequence ID" value="ENSMUSP00000028351.4"/>
    <property type="gene ID" value="ENSMUSG00000026975.11"/>
</dbReference>
<dbReference type="GeneID" id="67228"/>
<dbReference type="KEGG" id="mmu:67228"/>
<dbReference type="UCSC" id="uc008ipq.2">
    <molecule id="Q9CYU6-1"/>
    <property type="organism name" value="mouse"/>
</dbReference>
<dbReference type="UCSC" id="uc008ips.2">
    <molecule id="Q9CYU6-2"/>
    <property type="organism name" value="mouse"/>
</dbReference>
<dbReference type="AGR" id="MGI:1914478"/>
<dbReference type="CTD" id="92715"/>
<dbReference type="MGI" id="MGI:1914478">
    <property type="gene designation" value="Dph7"/>
</dbReference>
<dbReference type="VEuPathDB" id="HostDB:ENSMUSG00000026975"/>
<dbReference type="eggNOG" id="KOG0280">
    <property type="taxonomic scope" value="Eukaryota"/>
</dbReference>
<dbReference type="GeneTree" id="ENSGT00390000018644"/>
<dbReference type="HOGENOM" id="CLU_036100_2_1_1"/>
<dbReference type="InParanoid" id="Q9CYU6"/>
<dbReference type="OMA" id="LDMKWLP"/>
<dbReference type="OrthoDB" id="1930760at2759"/>
<dbReference type="PhylomeDB" id="Q9CYU6"/>
<dbReference type="TreeFam" id="TF324407"/>
<dbReference type="UniPathway" id="UPA00559"/>
<dbReference type="BioGRID-ORCS" id="67228">
    <property type="hits" value="4 hits in 78 CRISPR screens"/>
</dbReference>
<dbReference type="ChiTaRS" id="Dph7">
    <property type="organism name" value="mouse"/>
</dbReference>
<dbReference type="PRO" id="PR:Q9CYU6"/>
<dbReference type="Proteomes" id="UP000000589">
    <property type="component" value="Chromosome 2"/>
</dbReference>
<dbReference type="RNAct" id="Q9CYU6">
    <property type="molecule type" value="protein"/>
</dbReference>
<dbReference type="Bgee" id="ENSMUSG00000026975">
    <property type="expression patterns" value="Expressed in dentate gyrus of hippocampal formation granule cell and 212 other cell types or tissues"/>
</dbReference>
<dbReference type="ExpressionAtlas" id="Q9CYU6">
    <property type="expression patterns" value="baseline and differential"/>
</dbReference>
<dbReference type="GO" id="GO:0061685">
    <property type="term" value="F:diphthine methylesterase activity"/>
    <property type="evidence" value="ECO:0007669"/>
    <property type="project" value="UniProtKB-EC"/>
</dbReference>
<dbReference type="GO" id="GO:0051723">
    <property type="term" value="F:protein methylesterase activity"/>
    <property type="evidence" value="ECO:0000266"/>
    <property type="project" value="MGI"/>
</dbReference>
<dbReference type="GO" id="GO:0017183">
    <property type="term" value="P:protein histidyl modification to diphthamide"/>
    <property type="evidence" value="ECO:0000250"/>
    <property type="project" value="UniProtKB"/>
</dbReference>
<dbReference type="FunFam" id="2.130.10.10:FF:000910">
    <property type="entry name" value="Diphthamide biosynthesis 7"/>
    <property type="match status" value="1"/>
</dbReference>
<dbReference type="Gene3D" id="2.130.10.10">
    <property type="entry name" value="YVTN repeat-like/Quinoprotein amine dehydrogenase"/>
    <property type="match status" value="1"/>
</dbReference>
<dbReference type="InterPro" id="IPR052415">
    <property type="entry name" value="Diphthine_MTase"/>
</dbReference>
<dbReference type="InterPro" id="IPR015943">
    <property type="entry name" value="WD40/YVTN_repeat-like_dom_sf"/>
</dbReference>
<dbReference type="InterPro" id="IPR019775">
    <property type="entry name" value="WD40_repeat_CS"/>
</dbReference>
<dbReference type="InterPro" id="IPR036322">
    <property type="entry name" value="WD40_repeat_dom_sf"/>
</dbReference>
<dbReference type="InterPro" id="IPR001680">
    <property type="entry name" value="WD40_rpt"/>
</dbReference>
<dbReference type="PANTHER" id="PTHR46042">
    <property type="entry name" value="DIPHTHINE METHYLTRANSFERASE"/>
    <property type="match status" value="1"/>
</dbReference>
<dbReference type="PANTHER" id="PTHR46042:SF1">
    <property type="entry name" value="DIPHTHINE METHYLTRANSFERASE"/>
    <property type="match status" value="1"/>
</dbReference>
<dbReference type="Pfam" id="PF00400">
    <property type="entry name" value="WD40"/>
    <property type="match status" value="1"/>
</dbReference>
<dbReference type="SMART" id="SM00320">
    <property type="entry name" value="WD40"/>
    <property type="match status" value="4"/>
</dbReference>
<dbReference type="SUPFAM" id="SSF50978">
    <property type="entry name" value="WD40 repeat-like"/>
    <property type="match status" value="1"/>
</dbReference>
<dbReference type="PROSITE" id="PS00678">
    <property type="entry name" value="WD_REPEATS_1"/>
    <property type="match status" value="2"/>
</dbReference>
<dbReference type="PROSITE" id="PS50082">
    <property type="entry name" value="WD_REPEATS_2"/>
    <property type="match status" value="1"/>
</dbReference>
<dbReference type="PROSITE" id="PS50294">
    <property type="entry name" value="WD_REPEATS_REGION"/>
    <property type="match status" value="1"/>
</dbReference>
<name>DPH7_MOUSE</name>
<proteinExistence type="evidence at transcript level"/>
<reference key="1">
    <citation type="journal article" date="2005" name="Science">
        <title>The transcriptional landscape of the mammalian genome.</title>
        <authorList>
            <person name="Carninci P."/>
            <person name="Kasukawa T."/>
            <person name="Katayama S."/>
            <person name="Gough J."/>
            <person name="Frith M.C."/>
            <person name="Maeda N."/>
            <person name="Oyama R."/>
            <person name="Ravasi T."/>
            <person name="Lenhard B."/>
            <person name="Wells C."/>
            <person name="Kodzius R."/>
            <person name="Shimokawa K."/>
            <person name="Bajic V.B."/>
            <person name="Brenner S.E."/>
            <person name="Batalov S."/>
            <person name="Forrest A.R."/>
            <person name="Zavolan M."/>
            <person name="Davis M.J."/>
            <person name="Wilming L.G."/>
            <person name="Aidinis V."/>
            <person name="Allen J.E."/>
            <person name="Ambesi-Impiombato A."/>
            <person name="Apweiler R."/>
            <person name="Aturaliya R.N."/>
            <person name="Bailey T.L."/>
            <person name="Bansal M."/>
            <person name="Baxter L."/>
            <person name="Beisel K.W."/>
            <person name="Bersano T."/>
            <person name="Bono H."/>
            <person name="Chalk A.M."/>
            <person name="Chiu K.P."/>
            <person name="Choudhary V."/>
            <person name="Christoffels A."/>
            <person name="Clutterbuck D.R."/>
            <person name="Crowe M.L."/>
            <person name="Dalla E."/>
            <person name="Dalrymple B.P."/>
            <person name="de Bono B."/>
            <person name="Della Gatta G."/>
            <person name="di Bernardo D."/>
            <person name="Down T."/>
            <person name="Engstrom P."/>
            <person name="Fagiolini M."/>
            <person name="Faulkner G."/>
            <person name="Fletcher C.F."/>
            <person name="Fukushima T."/>
            <person name="Furuno M."/>
            <person name="Futaki S."/>
            <person name="Gariboldi M."/>
            <person name="Georgii-Hemming P."/>
            <person name="Gingeras T.R."/>
            <person name="Gojobori T."/>
            <person name="Green R.E."/>
            <person name="Gustincich S."/>
            <person name="Harbers M."/>
            <person name="Hayashi Y."/>
            <person name="Hensch T.K."/>
            <person name="Hirokawa N."/>
            <person name="Hill D."/>
            <person name="Huminiecki L."/>
            <person name="Iacono M."/>
            <person name="Ikeo K."/>
            <person name="Iwama A."/>
            <person name="Ishikawa T."/>
            <person name="Jakt M."/>
            <person name="Kanapin A."/>
            <person name="Katoh M."/>
            <person name="Kawasawa Y."/>
            <person name="Kelso J."/>
            <person name="Kitamura H."/>
            <person name="Kitano H."/>
            <person name="Kollias G."/>
            <person name="Krishnan S.P."/>
            <person name="Kruger A."/>
            <person name="Kummerfeld S.K."/>
            <person name="Kurochkin I.V."/>
            <person name="Lareau L.F."/>
            <person name="Lazarevic D."/>
            <person name="Lipovich L."/>
            <person name="Liu J."/>
            <person name="Liuni S."/>
            <person name="McWilliam S."/>
            <person name="Madan Babu M."/>
            <person name="Madera M."/>
            <person name="Marchionni L."/>
            <person name="Matsuda H."/>
            <person name="Matsuzawa S."/>
            <person name="Miki H."/>
            <person name="Mignone F."/>
            <person name="Miyake S."/>
            <person name="Morris K."/>
            <person name="Mottagui-Tabar S."/>
            <person name="Mulder N."/>
            <person name="Nakano N."/>
            <person name="Nakauchi H."/>
            <person name="Ng P."/>
            <person name="Nilsson R."/>
            <person name="Nishiguchi S."/>
            <person name="Nishikawa S."/>
            <person name="Nori F."/>
            <person name="Ohara O."/>
            <person name="Okazaki Y."/>
            <person name="Orlando V."/>
            <person name="Pang K.C."/>
            <person name="Pavan W.J."/>
            <person name="Pavesi G."/>
            <person name="Pesole G."/>
            <person name="Petrovsky N."/>
            <person name="Piazza S."/>
            <person name="Reed J."/>
            <person name="Reid J.F."/>
            <person name="Ring B.Z."/>
            <person name="Ringwald M."/>
            <person name="Rost B."/>
            <person name="Ruan Y."/>
            <person name="Salzberg S.L."/>
            <person name="Sandelin A."/>
            <person name="Schneider C."/>
            <person name="Schoenbach C."/>
            <person name="Sekiguchi K."/>
            <person name="Semple C.A."/>
            <person name="Seno S."/>
            <person name="Sessa L."/>
            <person name="Sheng Y."/>
            <person name="Shibata Y."/>
            <person name="Shimada H."/>
            <person name="Shimada K."/>
            <person name="Silva D."/>
            <person name="Sinclair B."/>
            <person name="Sperling S."/>
            <person name="Stupka E."/>
            <person name="Sugiura K."/>
            <person name="Sultana R."/>
            <person name="Takenaka Y."/>
            <person name="Taki K."/>
            <person name="Tammoja K."/>
            <person name="Tan S.L."/>
            <person name="Tang S."/>
            <person name="Taylor M.S."/>
            <person name="Tegner J."/>
            <person name="Teichmann S.A."/>
            <person name="Ueda H.R."/>
            <person name="van Nimwegen E."/>
            <person name="Verardo R."/>
            <person name="Wei C.L."/>
            <person name="Yagi K."/>
            <person name="Yamanishi H."/>
            <person name="Zabarovsky E."/>
            <person name="Zhu S."/>
            <person name="Zimmer A."/>
            <person name="Hide W."/>
            <person name="Bult C."/>
            <person name="Grimmond S.M."/>
            <person name="Teasdale R.D."/>
            <person name="Liu E.T."/>
            <person name="Brusic V."/>
            <person name="Quackenbush J."/>
            <person name="Wahlestedt C."/>
            <person name="Mattick J.S."/>
            <person name="Hume D.A."/>
            <person name="Kai C."/>
            <person name="Sasaki D."/>
            <person name="Tomaru Y."/>
            <person name="Fukuda S."/>
            <person name="Kanamori-Katayama M."/>
            <person name="Suzuki M."/>
            <person name="Aoki J."/>
            <person name="Arakawa T."/>
            <person name="Iida J."/>
            <person name="Imamura K."/>
            <person name="Itoh M."/>
            <person name="Kato T."/>
            <person name="Kawaji H."/>
            <person name="Kawagashira N."/>
            <person name="Kawashima T."/>
            <person name="Kojima M."/>
            <person name="Kondo S."/>
            <person name="Konno H."/>
            <person name="Nakano K."/>
            <person name="Ninomiya N."/>
            <person name="Nishio T."/>
            <person name="Okada M."/>
            <person name="Plessy C."/>
            <person name="Shibata K."/>
            <person name="Shiraki T."/>
            <person name="Suzuki S."/>
            <person name="Tagami M."/>
            <person name="Waki K."/>
            <person name="Watahiki A."/>
            <person name="Okamura-Oho Y."/>
            <person name="Suzuki H."/>
            <person name="Kawai J."/>
            <person name="Hayashizaki Y."/>
        </authorList>
    </citation>
    <scope>NUCLEOTIDE SEQUENCE [LARGE SCALE MRNA] (ISOFORMS 1 AND 2)</scope>
    <source>
        <strain>C57BL/6J</strain>
        <strain>NOD</strain>
        <tissue>Embryo</tissue>
        <tissue>Thymus</tissue>
        <tissue>Wolffian duct</tissue>
    </source>
</reference>
<reference key="2">
    <citation type="journal article" date="2009" name="PLoS Biol.">
        <title>Lineage-specific biology revealed by a finished genome assembly of the mouse.</title>
        <authorList>
            <person name="Church D.M."/>
            <person name="Goodstadt L."/>
            <person name="Hillier L.W."/>
            <person name="Zody M.C."/>
            <person name="Goldstein S."/>
            <person name="She X."/>
            <person name="Bult C.J."/>
            <person name="Agarwala R."/>
            <person name="Cherry J.L."/>
            <person name="DiCuccio M."/>
            <person name="Hlavina W."/>
            <person name="Kapustin Y."/>
            <person name="Meric P."/>
            <person name="Maglott D."/>
            <person name="Birtle Z."/>
            <person name="Marques A.C."/>
            <person name="Graves T."/>
            <person name="Zhou S."/>
            <person name="Teague B."/>
            <person name="Potamousis K."/>
            <person name="Churas C."/>
            <person name="Place M."/>
            <person name="Herschleb J."/>
            <person name="Runnheim R."/>
            <person name="Forrest D."/>
            <person name="Amos-Landgraf J."/>
            <person name="Schwartz D.C."/>
            <person name="Cheng Z."/>
            <person name="Lindblad-Toh K."/>
            <person name="Eichler E.E."/>
            <person name="Ponting C.P."/>
        </authorList>
    </citation>
    <scope>NUCLEOTIDE SEQUENCE [LARGE SCALE GENOMIC DNA]</scope>
    <source>
        <strain>C57BL/6J</strain>
    </source>
</reference>
<reference key="3">
    <citation type="journal article" date="2004" name="Genome Res.">
        <title>The status, quality, and expansion of the NIH full-length cDNA project: the Mammalian Gene Collection (MGC).</title>
        <authorList>
            <consortium name="The MGC Project Team"/>
        </authorList>
    </citation>
    <scope>NUCLEOTIDE SEQUENCE [LARGE SCALE MRNA] (ISOFORM 1)</scope>
    <source>
        <tissue>Olfactory epithelium</tissue>
    </source>
</reference>
<feature type="chain" id="PRO_0000050907" description="Diphthine methyltransferase">
    <location>
        <begin position="1"/>
        <end position="477"/>
    </location>
</feature>
<feature type="repeat" description="WD 1">
    <location>
        <begin position="194"/>
        <end position="232"/>
    </location>
</feature>
<feature type="repeat" description="WD 2">
    <location>
        <begin position="236"/>
        <end position="276"/>
    </location>
</feature>
<feature type="repeat" description="WD 3">
    <location>
        <begin position="422"/>
        <end position="464"/>
    </location>
</feature>
<feature type="splice variant" id="VSP_014526" description="In isoform 2." evidence="3">
    <location>
        <begin position="1"/>
        <end position="122"/>
    </location>
</feature>
<feature type="splice variant" id="VSP_014528" description="In isoform 2." evidence="3">
    <original>E</original>
    <variation>M</variation>
    <location>
        <position position="123"/>
    </location>
</feature>
<feature type="sequence conflict" description="In Ref. 1; BAC40084." evidence="4" ref="1">
    <original>K</original>
    <variation>N</variation>
    <location>
        <position position="235"/>
    </location>
</feature>
<feature type="sequence conflict" description="In Ref. 1; BAC40084." evidence="4" ref="1">
    <original>D</original>
    <variation>H</variation>
    <location>
        <position position="267"/>
    </location>
</feature>
<feature type="sequence conflict" description="In Ref. 1; BAC40084." evidence="4" ref="1">
    <original>D</original>
    <variation>Y</variation>
    <location>
        <position position="277"/>
    </location>
</feature>
<feature type="sequence conflict" description="In Ref. 1; BAC40084." evidence="4" ref="1">
    <original>G</original>
    <variation>R</variation>
    <location>
        <position position="282"/>
    </location>
</feature>
<feature type="sequence conflict" description="In Ref. 1; BAC40084." evidence="4" ref="1">
    <original>G</original>
    <variation>V</variation>
    <location>
        <position position="305"/>
    </location>
</feature>
<feature type="sequence conflict" description="In Ref. 1; BAC40084." evidence="4" ref="1">
    <original>A</original>
    <variation>P</variation>
    <location>
        <position position="392"/>
    </location>
</feature>
<feature type="sequence conflict" description="In Ref. 1; BAC40084." evidence="4" ref="1">
    <original>S</original>
    <variation>R</variation>
    <location>
        <position position="474"/>
    </location>
</feature>
<comment type="function">
    <text evidence="2">Catalyzes the demethylation of diphthine methyl ester to form diphthine, an intermediate diphthamide biosynthesis, a post-translational modification of histidine which occurs in translation elongation factor 2 (EEF2).</text>
</comment>
<comment type="catalytic activity">
    <reaction evidence="1">
        <text>diphthine methyl ester-[translation elongation factor 2] + H2O = diphthine-[translation elongation factor 2] + methanol + H(+)</text>
        <dbReference type="Rhea" id="RHEA:42656"/>
        <dbReference type="Rhea" id="RHEA-COMP:10172"/>
        <dbReference type="Rhea" id="RHEA-COMP:10173"/>
        <dbReference type="ChEBI" id="CHEBI:15377"/>
        <dbReference type="ChEBI" id="CHEBI:15378"/>
        <dbReference type="ChEBI" id="CHEBI:17790"/>
        <dbReference type="ChEBI" id="CHEBI:79005"/>
        <dbReference type="ChEBI" id="CHEBI:82696"/>
        <dbReference type="EC" id="3.1.1.97"/>
    </reaction>
</comment>
<comment type="pathway">
    <text>Protein modification; peptidyl-diphthamide biosynthesis.</text>
</comment>
<comment type="subunit">
    <text evidence="2">Interacts with INCA1.</text>
</comment>
<comment type="alternative products">
    <event type="alternative splicing"/>
    <isoform>
        <id>Q9CYU6-1</id>
        <name>1</name>
        <sequence type="displayed"/>
    </isoform>
    <isoform>
        <id>Q9CYU6-2</id>
        <name>2</name>
        <sequence type="described" ref="VSP_014526 VSP_014528"/>
    </isoform>
</comment>
<comment type="similarity">
    <text evidence="4">Belongs to the DPH7 family.</text>
</comment>
<comment type="sequence caution" evidence="4">
    <conflict type="erroneous termination">
        <sequence resource="EMBL" id="BC086486"/>
    </conflict>
    <text>Truncated C-terminus.</text>
</comment>
<protein>
    <recommendedName>
        <fullName>Diphthine methyltransferase</fullName>
        <ecNumber>3.1.1.97</ecNumber>
    </recommendedName>
    <alternativeName>
        <fullName>Diphthamide biosynthesis protein 7</fullName>
        <shortName>DPH7</shortName>
    </alternativeName>
    <alternativeName>
        <fullName>WD repeat-containing protein 85</fullName>
    </alternativeName>
</protein>
<organism>
    <name type="scientific">Mus musculus</name>
    <name type="common">Mouse</name>
    <dbReference type="NCBI Taxonomy" id="10090"/>
    <lineage>
        <taxon>Eukaryota</taxon>
        <taxon>Metazoa</taxon>
        <taxon>Chordata</taxon>
        <taxon>Craniata</taxon>
        <taxon>Vertebrata</taxon>
        <taxon>Euteleostomi</taxon>
        <taxon>Mammalia</taxon>
        <taxon>Eutheria</taxon>
        <taxon>Euarchontoglires</taxon>
        <taxon>Glires</taxon>
        <taxon>Rodentia</taxon>
        <taxon>Myomorpha</taxon>
        <taxon>Muroidea</taxon>
        <taxon>Muridae</taxon>
        <taxon>Murinae</taxon>
        <taxon>Mus</taxon>
        <taxon>Mus</taxon>
    </lineage>
</organism>
<evidence type="ECO:0000250" key="1">
    <source>
        <dbReference type="UniProtKB" id="P38332"/>
    </source>
</evidence>
<evidence type="ECO:0000250" key="2">
    <source>
        <dbReference type="UniProtKB" id="Q9BTV6"/>
    </source>
</evidence>
<evidence type="ECO:0000303" key="3">
    <source>
    </source>
</evidence>
<evidence type="ECO:0000305" key="4"/>
<gene>
    <name type="primary">Dph7</name>
    <name type="synonym">Wdr85</name>
</gene>
<sequence length="477" mass="53201">MAGSHAGTLRVLQAVDTELTADSVEWCPVEGYQHLLACGTYQLRAPRDQPALDGSEPQVRLGRLYLFSFSEHNTAKPLLEVQRRDSSAVLDMKWCHIPVSGHVLLGLANASGSIGLLRLMECENNSYTLQPISSLALDENCLSLSMDWSTGKSVRAREQPLKIISSDSKGQLHLLMVNEGTAELQLVASWPAHHFEAWIAAFNYWQTELVYSGGDDCLLRGWDTRMLGTPVFTSKRHCMGVCSIQSSPHQEHILATGSYDEHVLLWDTRNIRQPLADVPVQGGVWRLKWHPVHHHLLLAACMHNGFKILNCQKAIEEKQDITVLTSHEMPNSLVYGADWSWLFHSMKPTPTWFFDQNDMGVKAADHSSLKVTEEPPIHSQEQTMDRQVEGPANAHTRAELKASLLPLTEDMKNSKDCSSSSVKTRDLSHCSGGQSFDNSLLATCSFYDHVLHLWKWETNQARTLCSGTGCDLGSADH</sequence>